<feature type="chain" id="PRO_0000279431" description="Uncharacterized protein C16orf46 homolog">
    <location>
        <begin position="1"/>
        <end position="409"/>
    </location>
</feature>
<feature type="region of interest" description="Disordered" evidence="1">
    <location>
        <begin position="12"/>
        <end position="32"/>
    </location>
</feature>
<feature type="region of interest" description="Disordered" evidence="1">
    <location>
        <begin position="133"/>
        <end position="160"/>
    </location>
</feature>
<feature type="region of interest" description="Disordered" evidence="1">
    <location>
        <begin position="194"/>
        <end position="213"/>
    </location>
</feature>
<feature type="compositionally biased region" description="Polar residues" evidence="1">
    <location>
        <begin position="134"/>
        <end position="160"/>
    </location>
</feature>
<feature type="splice variant" id="VSP_023436" description="In isoform 2." evidence="2">
    <original>WEEAVHGWGRTSPTACIW</original>
    <variation>SMAGEGPHQLPASGQRRK</variation>
    <location>
        <begin position="67"/>
        <end position="84"/>
    </location>
</feature>
<feature type="splice variant" id="VSP_023437" description="In isoform 2." evidence="2">
    <location>
        <begin position="85"/>
        <end position="409"/>
    </location>
</feature>
<feature type="sequence conflict" description="In Ref. 1; BAB24650." evidence="3" ref="1">
    <original>S</original>
    <variation>A</variation>
    <location>
        <position position="231"/>
    </location>
</feature>
<reference key="1">
    <citation type="journal article" date="2005" name="Science">
        <title>The transcriptional landscape of the mammalian genome.</title>
        <authorList>
            <person name="Carninci P."/>
            <person name="Kasukawa T."/>
            <person name="Katayama S."/>
            <person name="Gough J."/>
            <person name="Frith M.C."/>
            <person name="Maeda N."/>
            <person name="Oyama R."/>
            <person name="Ravasi T."/>
            <person name="Lenhard B."/>
            <person name="Wells C."/>
            <person name="Kodzius R."/>
            <person name="Shimokawa K."/>
            <person name="Bajic V.B."/>
            <person name="Brenner S.E."/>
            <person name="Batalov S."/>
            <person name="Forrest A.R."/>
            <person name="Zavolan M."/>
            <person name="Davis M.J."/>
            <person name="Wilming L.G."/>
            <person name="Aidinis V."/>
            <person name="Allen J.E."/>
            <person name="Ambesi-Impiombato A."/>
            <person name="Apweiler R."/>
            <person name="Aturaliya R.N."/>
            <person name="Bailey T.L."/>
            <person name="Bansal M."/>
            <person name="Baxter L."/>
            <person name="Beisel K.W."/>
            <person name="Bersano T."/>
            <person name="Bono H."/>
            <person name="Chalk A.M."/>
            <person name="Chiu K.P."/>
            <person name="Choudhary V."/>
            <person name="Christoffels A."/>
            <person name="Clutterbuck D.R."/>
            <person name="Crowe M.L."/>
            <person name="Dalla E."/>
            <person name="Dalrymple B.P."/>
            <person name="de Bono B."/>
            <person name="Della Gatta G."/>
            <person name="di Bernardo D."/>
            <person name="Down T."/>
            <person name="Engstrom P."/>
            <person name="Fagiolini M."/>
            <person name="Faulkner G."/>
            <person name="Fletcher C.F."/>
            <person name="Fukushima T."/>
            <person name="Furuno M."/>
            <person name="Futaki S."/>
            <person name="Gariboldi M."/>
            <person name="Georgii-Hemming P."/>
            <person name="Gingeras T.R."/>
            <person name="Gojobori T."/>
            <person name="Green R.E."/>
            <person name="Gustincich S."/>
            <person name="Harbers M."/>
            <person name="Hayashi Y."/>
            <person name="Hensch T.K."/>
            <person name="Hirokawa N."/>
            <person name="Hill D."/>
            <person name="Huminiecki L."/>
            <person name="Iacono M."/>
            <person name="Ikeo K."/>
            <person name="Iwama A."/>
            <person name="Ishikawa T."/>
            <person name="Jakt M."/>
            <person name="Kanapin A."/>
            <person name="Katoh M."/>
            <person name="Kawasawa Y."/>
            <person name="Kelso J."/>
            <person name="Kitamura H."/>
            <person name="Kitano H."/>
            <person name="Kollias G."/>
            <person name="Krishnan S.P."/>
            <person name="Kruger A."/>
            <person name="Kummerfeld S.K."/>
            <person name="Kurochkin I.V."/>
            <person name="Lareau L.F."/>
            <person name="Lazarevic D."/>
            <person name="Lipovich L."/>
            <person name="Liu J."/>
            <person name="Liuni S."/>
            <person name="McWilliam S."/>
            <person name="Madan Babu M."/>
            <person name="Madera M."/>
            <person name="Marchionni L."/>
            <person name="Matsuda H."/>
            <person name="Matsuzawa S."/>
            <person name="Miki H."/>
            <person name="Mignone F."/>
            <person name="Miyake S."/>
            <person name="Morris K."/>
            <person name="Mottagui-Tabar S."/>
            <person name="Mulder N."/>
            <person name="Nakano N."/>
            <person name="Nakauchi H."/>
            <person name="Ng P."/>
            <person name="Nilsson R."/>
            <person name="Nishiguchi S."/>
            <person name="Nishikawa S."/>
            <person name="Nori F."/>
            <person name="Ohara O."/>
            <person name="Okazaki Y."/>
            <person name="Orlando V."/>
            <person name="Pang K.C."/>
            <person name="Pavan W.J."/>
            <person name="Pavesi G."/>
            <person name="Pesole G."/>
            <person name="Petrovsky N."/>
            <person name="Piazza S."/>
            <person name="Reed J."/>
            <person name="Reid J.F."/>
            <person name="Ring B.Z."/>
            <person name="Ringwald M."/>
            <person name="Rost B."/>
            <person name="Ruan Y."/>
            <person name="Salzberg S.L."/>
            <person name="Sandelin A."/>
            <person name="Schneider C."/>
            <person name="Schoenbach C."/>
            <person name="Sekiguchi K."/>
            <person name="Semple C.A."/>
            <person name="Seno S."/>
            <person name="Sessa L."/>
            <person name="Sheng Y."/>
            <person name="Shibata Y."/>
            <person name="Shimada H."/>
            <person name="Shimada K."/>
            <person name="Silva D."/>
            <person name="Sinclair B."/>
            <person name="Sperling S."/>
            <person name="Stupka E."/>
            <person name="Sugiura K."/>
            <person name="Sultana R."/>
            <person name="Takenaka Y."/>
            <person name="Taki K."/>
            <person name="Tammoja K."/>
            <person name="Tan S.L."/>
            <person name="Tang S."/>
            <person name="Taylor M.S."/>
            <person name="Tegner J."/>
            <person name="Teichmann S.A."/>
            <person name="Ueda H.R."/>
            <person name="van Nimwegen E."/>
            <person name="Verardo R."/>
            <person name="Wei C.L."/>
            <person name="Yagi K."/>
            <person name="Yamanishi H."/>
            <person name="Zabarovsky E."/>
            <person name="Zhu S."/>
            <person name="Zimmer A."/>
            <person name="Hide W."/>
            <person name="Bult C."/>
            <person name="Grimmond S.M."/>
            <person name="Teasdale R.D."/>
            <person name="Liu E.T."/>
            <person name="Brusic V."/>
            <person name="Quackenbush J."/>
            <person name="Wahlestedt C."/>
            <person name="Mattick J.S."/>
            <person name="Hume D.A."/>
            <person name="Kai C."/>
            <person name="Sasaki D."/>
            <person name="Tomaru Y."/>
            <person name="Fukuda S."/>
            <person name="Kanamori-Katayama M."/>
            <person name="Suzuki M."/>
            <person name="Aoki J."/>
            <person name="Arakawa T."/>
            <person name="Iida J."/>
            <person name="Imamura K."/>
            <person name="Itoh M."/>
            <person name="Kato T."/>
            <person name="Kawaji H."/>
            <person name="Kawagashira N."/>
            <person name="Kawashima T."/>
            <person name="Kojima M."/>
            <person name="Kondo S."/>
            <person name="Konno H."/>
            <person name="Nakano K."/>
            <person name="Ninomiya N."/>
            <person name="Nishio T."/>
            <person name="Okada M."/>
            <person name="Plessy C."/>
            <person name="Shibata K."/>
            <person name="Shiraki T."/>
            <person name="Suzuki S."/>
            <person name="Tagami M."/>
            <person name="Waki K."/>
            <person name="Watahiki A."/>
            <person name="Okamura-Oho Y."/>
            <person name="Suzuki H."/>
            <person name="Kawai J."/>
            <person name="Hayashizaki Y."/>
        </authorList>
    </citation>
    <scope>NUCLEOTIDE SEQUENCE [LARGE SCALE MRNA] (ISOFORM 1)</scope>
    <source>
        <strain>C57BL/6J</strain>
        <tissue>Testis</tissue>
    </source>
</reference>
<reference key="2">
    <citation type="journal article" date="2004" name="Genome Res.">
        <title>The status, quality, and expansion of the NIH full-length cDNA project: the Mammalian Gene Collection (MGC).</title>
        <authorList>
            <consortium name="The MGC Project Team"/>
        </authorList>
    </citation>
    <scope>NUCLEOTIDE SEQUENCE [LARGE SCALE MRNA] (ISOFORMS 1 AND 2)</scope>
    <source>
        <tissue>Testis</tissue>
    </source>
</reference>
<evidence type="ECO:0000256" key="1">
    <source>
        <dbReference type="SAM" id="MobiDB-lite"/>
    </source>
</evidence>
<evidence type="ECO:0000303" key="2">
    <source>
    </source>
</evidence>
<evidence type="ECO:0000305" key="3"/>
<sequence>MDVCEESETFLENTENQKIEATEETAPTLHCPDEKSERSHVCCLLGVSDLTLEEDGRASECAISTGWEEAVHGWGRTSPTACIWSKKKVKRGRAREGTNGGNDCLFCMSLSQGSLEPRSLLEVGKLEAGAEAEVSTQKSWSSEKNWSGLSQGPGTASREQSNKLCIPTDVHGEKKSLQLKEFIWCMEEWPMPETVSSKAGRNPSGSPEQGLSTPDSLAAKALVVLPPLKSSPHNLDVLSKKSRNIFWQPEEKVLRVEKDDCMACADGLKGVDGKGEKRHFELASHVKVTNVLPFPPTAAQTHLLSAESQRCCLHWSLLPQKSTVFPPNPSDIHYLATLQVLGQQGKQSCRTRLKTKDTKPPRTTAKHIITEAKQQNRPHVLESKVFPKPLLPSLTVSRVVIPVSTHRVL</sequence>
<accession>Q8BHB7</accession>
<accession>Q810Q8</accession>
<accession>Q9D9R4</accession>
<organism>
    <name type="scientific">Mus musculus</name>
    <name type="common">Mouse</name>
    <dbReference type="NCBI Taxonomy" id="10090"/>
    <lineage>
        <taxon>Eukaryota</taxon>
        <taxon>Metazoa</taxon>
        <taxon>Chordata</taxon>
        <taxon>Craniata</taxon>
        <taxon>Vertebrata</taxon>
        <taxon>Euteleostomi</taxon>
        <taxon>Mammalia</taxon>
        <taxon>Eutheria</taxon>
        <taxon>Euarchontoglires</taxon>
        <taxon>Glires</taxon>
        <taxon>Rodentia</taxon>
        <taxon>Myomorpha</taxon>
        <taxon>Muroidea</taxon>
        <taxon>Muridae</taxon>
        <taxon>Murinae</taxon>
        <taxon>Mus</taxon>
        <taxon>Mus</taxon>
    </lineage>
</organism>
<keyword id="KW-0025">Alternative splicing</keyword>
<keyword id="KW-1185">Reference proteome</keyword>
<name>CP046_MOUSE</name>
<protein>
    <recommendedName>
        <fullName>Uncharacterized protein C16orf46 homolog</fullName>
    </recommendedName>
</protein>
<proteinExistence type="evidence at transcript level"/>
<dbReference type="EMBL" id="AK006553">
    <property type="protein sequence ID" value="BAB24650.1"/>
    <property type="molecule type" value="mRNA"/>
</dbReference>
<dbReference type="EMBL" id="AK030075">
    <property type="protein sequence ID" value="BAC26769.1"/>
    <property type="molecule type" value="mRNA"/>
</dbReference>
<dbReference type="EMBL" id="AK031529">
    <property type="protein sequence ID" value="BAC27437.1"/>
    <property type="molecule type" value="mRNA"/>
</dbReference>
<dbReference type="EMBL" id="BC049630">
    <property type="protein sequence ID" value="AAH49630.1"/>
    <property type="molecule type" value="mRNA"/>
</dbReference>
<dbReference type="EMBL" id="BC100501">
    <property type="protein sequence ID" value="AAI00502.1"/>
    <property type="molecule type" value="mRNA"/>
</dbReference>
<dbReference type="CCDS" id="CCDS22695.1">
    <molecule id="Q8BHB7-1"/>
</dbReference>
<dbReference type="RefSeq" id="NP_001344182.1">
    <molecule id="Q8BHB7-1"/>
    <property type="nucleotide sequence ID" value="NM_001357253.1"/>
</dbReference>
<dbReference type="RefSeq" id="NP_001344183.1">
    <molecule id="Q8BHB7-1"/>
    <property type="nucleotide sequence ID" value="NM_001357254.1"/>
</dbReference>
<dbReference type="RefSeq" id="NP_081379.1">
    <molecule id="Q8BHB7-1"/>
    <property type="nucleotide sequence ID" value="NM_027103.3"/>
</dbReference>
<dbReference type="RefSeq" id="XP_006531408.1">
    <property type="nucleotide sequence ID" value="XM_006531345.2"/>
</dbReference>
<dbReference type="RefSeq" id="XP_006531409.1">
    <property type="nucleotide sequence ID" value="XM_006531346.3"/>
</dbReference>
<dbReference type="FunCoup" id="Q8BHB7">
    <property type="interactions" value="1309"/>
</dbReference>
<dbReference type="STRING" id="10090.ENSMUSP00000070601"/>
<dbReference type="iPTMnet" id="Q8BHB7"/>
<dbReference type="PhosphoSitePlus" id="Q8BHB7"/>
<dbReference type="PaxDb" id="10090-ENSMUSP00000070601"/>
<dbReference type="Antibodypedia" id="30436">
    <property type="antibodies" value="45 antibodies from 13 providers"/>
</dbReference>
<dbReference type="DNASU" id="69528"/>
<dbReference type="Ensembl" id="ENSMUST00000070577.7">
    <molecule id="Q8BHB7-1"/>
    <property type="protein sequence ID" value="ENSMUSP00000070601.6"/>
    <property type="gene ID" value="ENSMUSG00000031847.9"/>
</dbReference>
<dbReference type="Ensembl" id="ENSMUST00000213068.2">
    <molecule id="Q8BHB7-1"/>
    <property type="protein sequence ID" value="ENSMUSP00000148789.2"/>
    <property type="gene ID" value="ENSMUSG00000031847.9"/>
</dbReference>
<dbReference type="GeneID" id="69528"/>
<dbReference type="KEGG" id="mmu:69528"/>
<dbReference type="UCSC" id="uc009noq.1">
    <molecule id="Q8BHB7-1"/>
    <property type="organism name" value="mouse"/>
</dbReference>
<dbReference type="AGR" id="MGI:1916778"/>
<dbReference type="MGI" id="MGI:1916778">
    <property type="gene designation" value="1700030J22Rik"/>
</dbReference>
<dbReference type="VEuPathDB" id="HostDB:ENSMUSG00000031847"/>
<dbReference type="eggNOG" id="ENOG502SE77">
    <property type="taxonomic scope" value="Eukaryota"/>
</dbReference>
<dbReference type="GeneTree" id="ENSGT00390000017224"/>
<dbReference type="HOGENOM" id="CLU_058645_0_0_1"/>
<dbReference type="InParanoid" id="Q8BHB7"/>
<dbReference type="OMA" id="CKEDWAT"/>
<dbReference type="OrthoDB" id="9943020at2759"/>
<dbReference type="PhylomeDB" id="Q8BHB7"/>
<dbReference type="TreeFam" id="TF338349"/>
<dbReference type="BioGRID-ORCS" id="69528">
    <property type="hits" value="3 hits in 76 CRISPR screens"/>
</dbReference>
<dbReference type="PRO" id="PR:Q8BHB7"/>
<dbReference type="Proteomes" id="UP000000589">
    <property type="component" value="Chromosome 8"/>
</dbReference>
<dbReference type="RNAct" id="Q8BHB7">
    <property type="molecule type" value="protein"/>
</dbReference>
<dbReference type="Bgee" id="ENSMUSG00000031847">
    <property type="expression patterns" value="Expressed in spermatid and 60 other cell types or tissues"/>
</dbReference>
<dbReference type="ExpressionAtlas" id="Q8BHB7">
    <property type="expression patterns" value="baseline and differential"/>
</dbReference>
<dbReference type="GO" id="GO:0005829">
    <property type="term" value="C:cytosol"/>
    <property type="evidence" value="ECO:0007669"/>
    <property type="project" value="Ensembl"/>
</dbReference>
<dbReference type="GO" id="GO:0005654">
    <property type="term" value="C:nucleoplasm"/>
    <property type="evidence" value="ECO:0007669"/>
    <property type="project" value="Ensembl"/>
</dbReference>
<dbReference type="InterPro" id="IPR027836">
    <property type="entry name" value="DUF4529"/>
</dbReference>
<dbReference type="PANTHER" id="PTHR36869">
    <property type="entry name" value="CHROMOSOME 16 OPEN READING FRAME 46"/>
    <property type="match status" value="1"/>
</dbReference>
<dbReference type="PANTHER" id="PTHR36869:SF1">
    <property type="entry name" value="CHROMOSOME 16 OPEN READING FRAME 46"/>
    <property type="match status" value="1"/>
</dbReference>
<dbReference type="Pfam" id="PF15032">
    <property type="entry name" value="DUF4529"/>
    <property type="match status" value="1"/>
</dbReference>
<comment type="alternative products">
    <event type="alternative splicing"/>
    <isoform>
        <id>Q8BHB7-1</id>
        <name>1</name>
        <sequence type="displayed"/>
    </isoform>
    <isoform>
        <id>Q8BHB7-2</id>
        <name>2</name>
        <sequence type="described" ref="VSP_023436 VSP_023437"/>
    </isoform>
</comment>